<proteinExistence type="inferred from homology"/>
<feature type="chain" id="PRO_1000001805" description="Phosphate acyltransferase">
    <location>
        <begin position="1"/>
        <end position="336"/>
    </location>
</feature>
<reference key="1">
    <citation type="journal article" date="2005" name="Nat. Biotechnol.">
        <title>Complete genome sequence of the plant commensal Pseudomonas fluorescens Pf-5.</title>
        <authorList>
            <person name="Paulsen I.T."/>
            <person name="Press C.M."/>
            <person name="Ravel J."/>
            <person name="Kobayashi D.Y."/>
            <person name="Myers G.S.A."/>
            <person name="Mavrodi D.V."/>
            <person name="DeBoy R.T."/>
            <person name="Seshadri R."/>
            <person name="Ren Q."/>
            <person name="Madupu R."/>
            <person name="Dodson R.J."/>
            <person name="Durkin A.S."/>
            <person name="Brinkac L.M."/>
            <person name="Daugherty S.C."/>
            <person name="Sullivan S.A."/>
            <person name="Rosovitz M.J."/>
            <person name="Gwinn M.L."/>
            <person name="Zhou L."/>
            <person name="Schneider D.J."/>
            <person name="Cartinhour S.W."/>
            <person name="Nelson W.C."/>
            <person name="Weidman J."/>
            <person name="Watkins K."/>
            <person name="Tran K."/>
            <person name="Khouri H."/>
            <person name="Pierson E.A."/>
            <person name="Pierson L.S. III"/>
            <person name="Thomashow L.S."/>
            <person name="Loper J.E."/>
        </authorList>
    </citation>
    <scope>NUCLEOTIDE SEQUENCE [LARGE SCALE GENOMIC DNA]</scope>
    <source>
        <strain>ATCC BAA-477 / NRRL B-23932 / Pf-5</strain>
    </source>
</reference>
<gene>
    <name evidence="1" type="primary">plsX</name>
    <name type="ordered locus">PFL_1794</name>
</gene>
<keyword id="KW-0963">Cytoplasm</keyword>
<keyword id="KW-0444">Lipid biosynthesis</keyword>
<keyword id="KW-0443">Lipid metabolism</keyword>
<keyword id="KW-0594">Phospholipid biosynthesis</keyword>
<keyword id="KW-1208">Phospholipid metabolism</keyword>
<keyword id="KW-0808">Transferase</keyword>
<name>PLSX_PSEF5</name>
<evidence type="ECO:0000255" key="1">
    <source>
        <dbReference type="HAMAP-Rule" id="MF_00019"/>
    </source>
</evidence>
<evidence type="ECO:0000305" key="2"/>
<sequence length="336" mass="35602">MSAQVIAIDAMGGDFGPRSIVQASIACLSATPSLHLTLVGQPSLLEELISGQTAVDRARLTITPASEVITMDEKPSQALRGKPDSSMRVALELLRDEKVQACVSAGNTGALMALSRYVLKTLPGIDRPAMVAAIPTQRGYCQLLDLGANVDCSAEHLLQFAVMGSVAAETLGIVRPRVALLNIGTEDIKGNQQVKLAASLLQQARGLNYIGFVEGDGLYRGEADVVVCDGFVGNILLKSSEGLATMIAARIEALFRQNLLSRAVGALALPLMRRLQADLAPARHNGASFLGLQGIVVKSHGSAGVQGFQSAIQRALIEIQEDLPRRLHGRLEDLLL</sequence>
<organism>
    <name type="scientific">Pseudomonas fluorescens (strain ATCC BAA-477 / NRRL B-23932 / Pf-5)</name>
    <dbReference type="NCBI Taxonomy" id="220664"/>
    <lineage>
        <taxon>Bacteria</taxon>
        <taxon>Pseudomonadati</taxon>
        <taxon>Pseudomonadota</taxon>
        <taxon>Gammaproteobacteria</taxon>
        <taxon>Pseudomonadales</taxon>
        <taxon>Pseudomonadaceae</taxon>
        <taxon>Pseudomonas</taxon>
    </lineage>
</organism>
<protein>
    <recommendedName>
        <fullName evidence="1">Phosphate acyltransferase</fullName>
        <ecNumber evidence="1">2.3.1.274</ecNumber>
    </recommendedName>
    <alternativeName>
        <fullName evidence="1">Acyl-ACP phosphotransacylase</fullName>
    </alternativeName>
    <alternativeName>
        <fullName evidence="1">Acyl-[acyl-carrier-protein]--phosphate acyltransferase</fullName>
    </alternativeName>
    <alternativeName>
        <fullName evidence="1">Phosphate-acyl-ACP acyltransferase</fullName>
    </alternativeName>
</protein>
<comment type="function">
    <text evidence="1">Catalyzes the reversible formation of acyl-phosphate (acyl-PO(4)) from acyl-[acyl-carrier-protein] (acyl-ACP). This enzyme utilizes acyl-ACP as fatty acyl donor, but not acyl-CoA.</text>
</comment>
<comment type="catalytic activity">
    <reaction evidence="1">
        <text>a fatty acyl-[ACP] + phosphate = an acyl phosphate + holo-[ACP]</text>
        <dbReference type="Rhea" id="RHEA:42292"/>
        <dbReference type="Rhea" id="RHEA-COMP:9685"/>
        <dbReference type="Rhea" id="RHEA-COMP:14125"/>
        <dbReference type="ChEBI" id="CHEBI:43474"/>
        <dbReference type="ChEBI" id="CHEBI:59918"/>
        <dbReference type="ChEBI" id="CHEBI:64479"/>
        <dbReference type="ChEBI" id="CHEBI:138651"/>
        <dbReference type="EC" id="2.3.1.274"/>
    </reaction>
</comment>
<comment type="pathway">
    <text evidence="1">Lipid metabolism; phospholipid metabolism.</text>
</comment>
<comment type="subunit">
    <text evidence="1">Homodimer. Probably interacts with PlsY.</text>
</comment>
<comment type="subcellular location">
    <subcellularLocation>
        <location evidence="1">Cytoplasm</location>
    </subcellularLocation>
    <text evidence="1">Associated with the membrane possibly through PlsY.</text>
</comment>
<comment type="similarity">
    <text evidence="1">Belongs to the PlsX family.</text>
</comment>
<comment type="sequence caution" evidence="2">
    <conflict type="erroneous initiation">
        <sequence resource="EMBL-CDS" id="AAY91083"/>
    </conflict>
    <text>Truncated N-terminus.</text>
</comment>
<dbReference type="EC" id="2.3.1.274" evidence="1"/>
<dbReference type="EMBL" id="CP000076">
    <property type="protein sequence ID" value="AAY91083.2"/>
    <property type="status" value="ALT_INIT"/>
    <property type="molecule type" value="Genomic_DNA"/>
</dbReference>
<dbReference type="RefSeq" id="WP_072444184.1">
    <property type="nucleotide sequence ID" value="NC_004129.6"/>
</dbReference>
<dbReference type="SMR" id="Q4KFR9"/>
<dbReference type="STRING" id="220664.PFL_1794"/>
<dbReference type="KEGG" id="pfl:PFL_1794"/>
<dbReference type="eggNOG" id="COG0416">
    <property type="taxonomic scope" value="Bacteria"/>
</dbReference>
<dbReference type="HOGENOM" id="CLU_039379_1_0_6"/>
<dbReference type="UniPathway" id="UPA00085"/>
<dbReference type="Proteomes" id="UP000008540">
    <property type="component" value="Chromosome"/>
</dbReference>
<dbReference type="GO" id="GO:0005737">
    <property type="term" value="C:cytoplasm"/>
    <property type="evidence" value="ECO:0007669"/>
    <property type="project" value="UniProtKB-SubCell"/>
</dbReference>
<dbReference type="GO" id="GO:0043811">
    <property type="term" value="F:phosphate:acyl-[acyl carrier protein] acyltransferase activity"/>
    <property type="evidence" value="ECO:0007669"/>
    <property type="project" value="UniProtKB-UniRule"/>
</dbReference>
<dbReference type="GO" id="GO:0006633">
    <property type="term" value="P:fatty acid biosynthetic process"/>
    <property type="evidence" value="ECO:0007669"/>
    <property type="project" value="UniProtKB-UniRule"/>
</dbReference>
<dbReference type="GO" id="GO:0008654">
    <property type="term" value="P:phospholipid biosynthetic process"/>
    <property type="evidence" value="ECO:0007669"/>
    <property type="project" value="UniProtKB-KW"/>
</dbReference>
<dbReference type="Gene3D" id="3.40.718.10">
    <property type="entry name" value="Isopropylmalate Dehydrogenase"/>
    <property type="match status" value="1"/>
</dbReference>
<dbReference type="HAMAP" id="MF_00019">
    <property type="entry name" value="PlsX"/>
    <property type="match status" value="1"/>
</dbReference>
<dbReference type="InterPro" id="IPR003664">
    <property type="entry name" value="FA_synthesis"/>
</dbReference>
<dbReference type="InterPro" id="IPR012281">
    <property type="entry name" value="Phospholipid_synth_PlsX-like"/>
</dbReference>
<dbReference type="NCBIfam" id="TIGR00182">
    <property type="entry name" value="plsX"/>
    <property type="match status" value="1"/>
</dbReference>
<dbReference type="PANTHER" id="PTHR30100">
    <property type="entry name" value="FATTY ACID/PHOSPHOLIPID SYNTHESIS PROTEIN PLSX"/>
    <property type="match status" value="1"/>
</dbReference>
<dbReference type="PANTHER" id="PTHR30100:SF1">
    <property type="entry name" value="PHOSPHATE ACYLTRANSFERASE"/>
    <property type="match status" value="1"/>
</dbReference>
<dbReference type="Pfam" id="PF02504">
    <property type="entry name" value="FA_synthesis"/>
    <property type="match status" value="1"/>
</dbReference>
<dbReference type="PIRSF" id="PIRSF002465">
    <property type="entry name" value="Phsphlp_syn_PlsX"/>
    <property type="match status" value="1"/>
</dbReference>
<dbReference type="SUPFAM" id="SSF53659">
    <property type="entry name" value="Isocitrate/Isopropylmalate dehydrogenase-like"/>
    <property type="match status" value="1"/>
</dbReference>
<accession>Q4KFR9</accession>